<proteinExistence type="inferred from homology"/>
<sequence>MFNDIPVFDYEDIQLIPNKCIITSRSQADTSVTLGKYQFKLPVIPANMQTIIDETIAERLAKEGYFYIMHRFDEDSRKPFIKRMHEQGLIASISVGVKACEYEFVTSLKEDAPEFITIDIAHGHANSVIDMIKHIKTELPETFVIAGNVGTPEAVRELENAGADATKVGIGPGKVCITKVKTGFGTGGWQLAALRWCAKAARKPIIADGGIRTHGDIAKSIRFGASMVMIGSLFAGHIESPGKTVEVDGETFKEYYGSASEYQKGEHKNVEGKKILLPTKGHLSDTLTEMQQDLQSSISYAGGKDLDSLRHVDYVIVKNSIWNGDSI</sequence>
<accession>Q48TL6</accession>
<name>GUAC_STRPM</name>
<keyword id="KW-0521">NADP</keyword>
<keyword id="KW-0560">Oxidoreductase</keyword>
<dbReference type="EC" id="1.7.1.7" evidence="1"/>
<dbReference type="EMBL" id="CP000056">
    <property type="protein sequence ID" value="AAX71944.1"/>
    <property type="status" value="ALT_INIT"/>
    <property type="molecule type" value="Genomic_DNA"/>
</dbReference>
<dbReference type="RefSeq" id="WP_021340933.1">
    <property type="nucleotide sequence ID" value="NC_007296.2"/>
</dbReference>
<dbReference type="SMR" id="Q48TL6"/>
<dbReference type="KEGG" id="spb:M28_Spy0831"/>
<dbReference type="HOGENOM" id="CLU_022552_5_0_9"/>
<dbReference type="GO" id="GO:0005829">
    <property type="term" value="C:cytosol"/>
    <property type="evidence" value="ECO:0007669"/>
    <property type="project" value="TreeGrafter"/>
</dbReference>
<dbReference type="GO" id="GO:1902560">
    <property type="term" value="C:GMP reductase complex"/>
    <property type="evidence" value="ECO:0007669"/>
    <property type="project" value="InterPro"/>
</dbReference>
<dbReference type="GO" id="GO:0003920">
    <property type="term" value="F:GMP reductase activity"/>
    <property type="evidence" value="ECO:0007669"/>
    <property type="project" value="UniProtKB-UniRule"/>
</dbReference>
<dbReference type="GO" id="GO:0006163">
    <property type="term" value="P:purine nucleotide metabolic process"/>
    <property type="evidence" value="ECO:0007669"/>
    <property type="project" value="UniProtKB-UniRule"/>
</dbReference>
<dbReference type="CDD" id="cd00381">
    <property type="entry name" value="IMPDH"/>
    <property type="match status" value="1"/>
</dbReference>
<dbReference type="FunFam" id="3.20.20.70:FF:000424">
    <property type="entry name" value="Inosine-5'-monophosphate dehydrogenase 2"/>
    <property type="match status" value="1"/>
</dbReference>
<dbReference type="Gene3D" id="3.20.20.70">
    <property type="entry name" value="Aldolase class I"/>
    <property type="match status" value="1"/>
</dbReference>
<dbReference type="HAMAP" id="MF_01511">
    <property type="entry name" value="GMP_reduct_type2"/>
    <property type="match status" value="1"/>
</dbReference>
<dbReference type="InterPro" id="IPR013785">
    <property type="entry name" value="Aldolase_TIM"/>
</dbReference>
<dbReference type="InterPro" id="IPR050139">
    <property type="entry name" value="GMP_reductase"/>
</dbReference>
<dbReference type="InterPro" id="IPR005994">
    <property type="entry name" value="GuaC_type_2"/>
</dbReference>
<dbReference type="InterPro" id="IPR015875">
    <property type="entry name" value="IMP_DH/GMP_Rdtase_CS"/>
</dbReference>
<dbReference type="InterPro" id="IPR001093">
    <property type="entry name" value="IMP_DH_GMPRt"/>
</dbReference>
<dbReference type="NCBIfam" id="TIGR01306">
    <property type="entry name" value="GMP_reduct_2"/>
    <property type="match status" value="1"/>
</dbReference>
<dbReference type="NCBIfam" id="NF003966">
    <property type="entry name" value="PRK05458.1"/>
    <property type="match status" value="1"/>
</dbReference>
<dbReference type="PANTHER" id="PTHR43170">
    <property type="entry name" value="GMP REDUCTASE"/>
    <property type="match status" value="1"/>
</dbReference>
<dbReference type="PANTHER" id="PTHR43170:SF5">
    <property type="entry name" value="GMP REDUCTASE"/>
    <property type="match status" value="1"/>
</dbReference>
<dbReference type="Pfam" id="PF00478">
    <property type="entry name" value="IMPDH"/>
    <property type="match status" value="1"/>
</dbReference>
<dbReference type="PIRSF" id="PIRSF036500">
    <property type="entry name" value="GMP_red_Firmic"/>
    <property type="match status" value="1"/>
</dbReference>
<dbReference type="SMART" id="SM01240">
    <property type="entry name" value="IMPDH"/>
    <property type="match status" value="1"/>
</dbReference>
<dbReference type="SUPFAM" id="SSF51412">
    <property type="entry name" value="Inosine monophosphate dehydrogenase (IMPDH)"/>
    <property type="match status" value="1"/>
</dbReference>
<dbReference type="PROSITE" id="PS00487">
    <property type="entry name" value="IMP_DH_GMP_RED"/>
    <property type="match status" value="1"/>
</dbReference>
<reference key="1">
    <citation type="journal article" date="2005" name="J. Infect. Dis.">
        <title>Genome sequence of a serotype M28 strain of group A Streptococcus: potential new insights into puerperal sepsis and bacterial disease specificity.</title>
        <authorList>
            <person name="Green N.M."/>
            <person name="Zhang S."/>
            <person name="Porcella S.F."/>
            <person name="Nagiec M.J."/>
            <person name="Barbian K.D."/>
            <person name="Beres S.B."/>
            <person name="Lefebvre R.B."/>
            <person name="Musser J.M."/>
        </authorList>
    </citation>
    <scope>NUCLEOTIDE SEQUENCE [LARGE SCALE GENOMIC DNA]</scope>
    <source>
        <strain>MGAS6180</strain>
    </source>
</reference>
<comment type="function">
    <text evidence="1">Catalyzes the irreversible NADPH-dependent deamination of GMP to IMP. It functions in the conversion of nucleobase, nucleoside and nucleotide derivatives of G to A nucleotides, and in maintaining the intracellular balance of A and G nucleotides.</text>
</comment>
<comment type="catalytic activity">
    <reaction evidence="1">
        <text>IMP + NH4(+) + NADP(+) = GMP + NADPH + 2 H(+)</text>
        <dbReference type="Rhea" id="RHEA:17185"/>
        <dbReference type="ChEBI" id="CHEBI:15378"/>
        <dbReference type="ChEBI" id="CHEBI:28938"/>
        <dbReference type="ChEBI" id="CHEBI:57783"/>
        <dbReference type="ChEBI" id="CHEBI:58053"/>
        <dbReference type="ChEBI" id="CHEBI:58115"/>
        <dbReference type="ChEBI" id="CHEBI:58349"/>
        <dbReference type="EC" id="1.7.1.7"/>
    </reaction>
</comment>
<comment type="similarity">
    <text evidence="1">Belongs to the IMPDH/GMPR family. GuaC type 2 subfamily.</text>
</comment>
<comment type="sequence caution" evidence="2">
    <conflict type="erroneous initiation">
        <sequence resource="EMBL-CDS" id="AAX71944"/>
    </conflict>
</comment>
<gene>
    <name evidence="1" type="primary">guaC</name>
    <name type="ordered locus">M28_Spy0831</name>
</gene>
<feature type="chain" id="PRO_0000093779" description="GMP reductase">
    <location>
        <begin position="1"/>
        <end position="327"/>
    </location>
</feature>
<feature type="active site" description="Thioimidate intermediate" evidence="1">
    <location>
        <position position="176"/>
    </location>
</feature>
<feature type="binding site" evidence="1">
    <location>
        <begin position="205"/>
        <end position="228"/>
    </location>
    <ligand>
        <name>NADP(+)</name>
        <dbReference type="ChEBI" id="CHEBI:58349"/>
    </ligand>
</feature>
<evidence type="ECO:0000255" key="1">
    <source>
        <dbReference type="HAMAP-Rule" id="MF_01511"/>
    </source>
</evidence>
<evidence type="ECO:0000305" key="2"/>
<protein>
    <recommendedName>
        <fullName evidence="1">GMP reductase</fullName>
        <ecNumber evidence="1">1.7.1.7</ecNumber>
    </recommendedName>
    <alternativeName>
        <fullName evidence="1">Guanosine 5'-monophosphate oxidoreductase</fullName>
        <shortName evidence="1">Guanosine monophosphate reductase</shortName>
    </alternativeName>
</protein>
<organism>
    <name type="scientific">Streptococcus pyogenes serotype M28 (strain MGAS6180)</name>
    <dbReference type="NCBI Taxonomy" id="319701"/>
    <lineage>
        <taxon>Bacteria</taxon>
        <taxon>Bacillati</taxon>
        <taxon>Bacillota</taxon>
        <taxon>Bacilli</taxon>
        <taxon>Lactobacillales</taxon>
        <taxon>Streptococcaceae</taxon>
        <taxon>Streptococcus</taxon>
    </lineage>
</organism>